<feature type="chain" id="PRO_0000335026" description="Glutamyl-tRNA reductase">
    <location>
        <begin position="1"/>
        <end position="416"/>
    </location>
</feature>
<feature type="active site" description="Nucleophile" evidence="1">
    <location>
        <position position="49"/>
    </location>
</feature>
<feature type="binding site" evidence="1">
    <location>
        <begin position="48"/>
        <end position="51"/>
    </location>
    <ligand>
        <name>substrate</name>
    </ligand>
</feature>
<feature type="binding site" evidence="1">
    <location>
        <position position="104"/>
    </location>
    <ligand>
        <name>substrate</name>
    </ligand>
</feature>
<feature type="binding site" evidence="1">
    <location>
        <begin position="109"/>
        <end position="111"/>
    </location>
    <ligand>
        <name>substrate</name>
    </ligand>
</feature>
<feature type="binding site" evidence="1">
    <location>
        <position position="115"/>
    </location>
    <ligand>
        <name>substrate</name>
    </ligand>
</feature>
<feature type="binding site" evidence="1">
    <location>
        <begin position="184"/>
        <end position="189"/>
    </location>
    <ligand>
        <name>NADP(+)</name>
        <dbReference type="ChEBI" id="CHEBI:58349"/>
    </ligand>
</feature>
<feature type="site" description="Important for activity" evidence="1">
    <location>
        <position position="94"/>
    </location>
</feature>
<keyword id="KW-0521">NADP</keyword>
<keyword id="KW-0560">Oxidoreductase</keyword>
<keyword id="KW-0627">Porphyrin biosynthesis</keyword>
<proteinExistence type="inferred from homology"/>
<evidence type="ECO:0000255" key="1">
    <source>
        <dbReference type="HAMAP-Rule" id="MF_00087"/>
    </source>
</evidence>
<protein>
    <recommendedName>
        <fullName evidence="1">Glutamyl-tRNA reductase</fullName>
        <shortName evidence="1">GluTR</shortName>
        <ecNumber evidence="1">1.2.1.70</ecNumber>
    </recommendedName>
</protein>
<sequence>MIFTLGINHHSAPLAIRERVAFGADKLPHALADLTRERPVREVAILSTCNRTEIYCSAESPDVVIDWLAHYHQVGREEIAPYIYTHDQPEAIRHAFRVASGLDSMVIGEPQILGQMKDAVRAAEENGTLGTQLHKLFQRSFSVAKEVRSTTAIGANIVSMAAAGVHLAERIFESIAGQRILFIGAGEMIELCAAHFCAGKPKQVTIANRTLERGRALAEQYGGTAIRLDELGEHLAQHDIVVSCTASPLPIIGLGMVERAIKTRRHRPIFMVDLAVPRDIEEEVGELDDVFLYTVDDLAQVVESGLESRQAAVVEAEDIIANRVKDFLGWLESRDTVPVIRSLRDSAERMRRHEIEHAMKLLAKGEAPEKVLEHLSHRLTNKFLHAPTQTLNSAEGGERADLQGAAARLFHLHAAD</sequence>
<accession>Q479R3</accession>
<comment type="function">
    <text evidence="1">Catalyzes the NADPH-dependent reduction of glutamyl-tRNA(Glu) to glutamate 1-semialdehyde (GSA).</text>
</comment>
<comment type="catalytic activity">
    <reaction evidence="1">
        <text>(S)-4-amino-5-oxopentanoate + tRNA(Glu) + NADP(+) = L-glutamyl-tRNA(Glu) + NADPH + H(+)</text>
        <dbReference type="Rhea" id="RHEA:12344"/>
        <dbReference type="Rhea" id="RHEA-COMP:9663"/>
        <dbReference type="Rhea" id="RHEA-COMP:9680"/>
        <dbReference type="ChEBI" id="CHEBI:15378"/>
        <dbReference type="ChEBI" id="CHEBI:57501"/>
        <dbReference type="ChEBI" id="CHEBI:57783"/>
        <dbReference type="ChEBI" id="CHEBI:58349"/>
        <dbReference type="ChEBI" id="CHEBI:78442"/>
        <dbReference type="ChEBI" id="CHEBI:78520"/>
        <dbReference type="EC" id="1.2.1.70"/>
    </reaction>
</comment>
<comment type="pathway">
    <text evidence="1">Porphyrin-containing compound metabolism; protoporphyrin-IX biosynthesis; 5-aminolevulinate from L-glutamyl-tRNA(Glu): step 1/2.</text>
</comment>
<comment type="subunit">
    <text evidence="1">Homodimer.</text>
</comment>
<comment type="domain">
    <text evidence="1">Possesses an unusual extended V-shaped dimeric structure with each monomer consisting of three distinct domains arranged along a curved 'spinal' alpha-helix. The N-terminal catalytic domain specifically recognizes the glutamate moiety of the substrate. The second domain is the NADPH-binding domain, and the third C-terminal domain is responsible for dimerization.</text>
</comment>
<comment type="miscellaneous">
    <text evidence="1">During catalysis, the active site Cys acts as a nucleophile attacking the alpha-carbonyl group of tRNA-bound glutamate with the formation of a thioester intermediate between enzyme and glutamate, and the concomitant release of tRNA(Glu). The thioester intermediate is finally reduced by direct hydride transfer from NADPH, to form the product GSA.</text>
</comment>
<comment type="similarity">
    <text evidence="1">Belongs to the glutamyl-tRNA reductase family.</text>
</comment>
<reference key="1">
    <citation type="journal article" date="2009" name="BMC Genomics">
        <title>Metabolic analysis of the soil microbe Dechloromonas aromatica str. RCB: indications of a surprisingly complex life-style and cryptic anaerobic pathways for aromatic degradation.</title>
        <authorList>
            <person name="Salinero K.K."/>
            <person name="Keller K."/>
            <person name="Feil W.S."/>
            <person name="Feil H."/>
            <person name="Trong S."/>
            <person name="Di Bartolo G."/>
            <person name="Lapidus A."/>
        </authorList>
    </citation>
    <scope>NUCLEOTIDE SEQUENCE [LARGE SCALE GENOMIC DNA]</scope>
    <source>
        <strain>RCB</strain>
    </source>
</reference>
<organism>
    <name type="scientific">Dechloromonas aromatica (strain RCB)</name>
    <dbReference type="NCBI Taxonomy" id="159087"/>
    <lineage>
        <taxon>Bacteria</taxon>
        <taxon>Pseudomonadati</taxon>
        <taxon>Pseudomonadota</taxon>
        <taxon>Betaproteobacteria</taxon>
        <taxon>Rhodocyclales</taxon>
        <taxon>Azonexaceae</taxon>
        <taxon>Dechloromonas</taxon>
    </lineage>
</organism>
<gene>
    <name evidence="1" type="primary">hemA</name>
    <name type="ordered locus">Daro_3689</name>
</gene>
<name>HEM1_DECAR</name>
<dbReference type="EC" id="1.2.1.70" evidence="1"/>
<dbReference type="EMBL" id="CP000089">
    <property type="protein sequence ID" value="AAZ48418.1"/>
    <property type="molecule type" value="Genomic_DNA"/>
</dbReference>
<dbReference type="SMR" id="Q479R3"/>
<dbReference type="STRING" id="159087.Daro_3689"/>
<dbReference type="KEGG" id="dar:Daro_3689"/>
<dbReference type="eggNOG" id="COG0373">
    <property type="taxonomic scope" value="Bacteria"/>
</dbReference>
<dbReference type="HOGENOM" id="CLU_035113_2_2_4"/>
<dbReference type="OrthoDB" id="110209at2"/>
<dbReference type="UniPathway" id="UPA00251">
    <property type="reaction ID" value="UER00316"/>
</dbReference>
<dbReference type="GO" id="GO:0008883">
    <property type="term" value="F:glutamyl-tRNA reductase activity"/>
    <property type="evidence" value="ECO:0007669"/>
    <property type="project" value="UniProtKB-UniRule"/>
</dbReference>
<dbReference type="GO" id="GO:0050661">
    <property type="term" value="F:NADP binding"/>
    <property type="evidence" value="ECO:0007669"/>
    <property type="project" value="InterPro"/>
</dbReference>
<dbReference type="GO" id="GO:0019353">
    <property type="term" value="P:protoporphyrinogen IX biosynthetic process from glutamate"/>
    <property type="evidence" value="ECO:0007669"/>
    <property type="project" value="TreeGrafter"/>
</dbReference>
<dbReference type="CDD" id="cd05213">
    <property type="entry name" value="NAD_bind_Glutamyl_tRNA_reduct"/>
    <property type="match status" value="1"/>
</dbReference>
<dbReference type="FunFam" id="3.30.460.30:FF:000001">
    <property type="entry name" value="Glutamyl-tRNA reductase"/>
    <property type="match status" value="1"/>
</dbReference>
<dbReference type="FunFam" id="3.40.50.720:FF:000031">
    <property type="entry name" value="Glutamyl-tRNA reductase"/>
    <property type="match status" value="1"/>
</dbReference>
<dbReference type="Gene3D" id="3.30.460.30">
    <property type="entry name" value="Glutamyl-tRNA reductase, N-terminal domain"/>
    <property type="match status" value="1"/>
</dbReference>
<dbReference type="Gene3D" id="3.40.50.720">
    <property type="entry name" value="NAD(P)-binding Rossmann-like Domain"/>
    <property type="match status" value="1"/>
</dbReference>
<dbReference type="HAMAP" id="MF_00087">
    <property type="entry name" value="Glu_tRNA_reductase"/>
    <property type="match status" value="1"/>
</dbReference>
<dbReference type="InterPro" id="IPR000343">
    <property type="entry name" value="4pyrrol_synth_GluRdtase"/>
</dbReference>
<dbReference type="InterPro" id="IPR015896">
    <property type="entry name" value="4pyrrol_synth_GluRdtase_dimer"/>
</dbReference>
<dbReference type="InterPro" id="IPR015895">
    <property type="entry name" value="4pyrrol_synth_GluRdtase_N"/>
</dbReference>
<dbReference type="InterPro" id="IPR018214">
    <property type="entry name" value="GluRdtase_CS"/>
</dbReference>
<dbReference type="InterPro" id="IPR036453">
    <property type="entry name" value="GluRdtase_dimer_dom_sf"/>
</dbReference>
<dbReference type="InterPro" id="IPR036343">
    <property type="entry name" value="GluRdtase_N_sf"/>
</dbReference>
<dbReference type="InterPro" id="IPR036291">
    <property type="entry name" value="NAD(P)-bd_dom_sf"/>
</dbReference>
<dbReference type="InterPro" id="IPR006151">
    <property type="entry name" value="Shikm_DH/Glu-tRNA_Rdtase"/>
</dbReference>
<dbReference type="NCBIfam" id="TIGR01035">
    <property type="entry name" value="hemA"/>
    <property type="match status" value="1"/>
</dbReference>
<dbReference type="PANTHER" id="PTHR43013">
    <property type="entry name" value="GLUTAMYL-TRNA REDUCTASE"/>
    <property type="match status" value="1"/>
</dbReference>
<dbReference type="PANTHER" id="PTHR43013:SF1">
    <property type="entry name" value="GLUTAMYL-TRNA REDUCTASE"/>
    <property type="match status" value="1"/>
</dbReference>
<dbReference type="Pfam" id="PF00745">
    <property type="entry name" value="GlutR_dimer"/>
    <property type="match status" value="1"/>
</dbReference>
<dbReference type="Pfam" id="PF05201">
    <property type="entry name" value="GlutR_N"/>
    <property type="match status" value="1"/>
</dbReference>
<dbReference type="Pfam" id="PF01488">
    <property type="entry name" value="Shikimate_DH"/>
    <property type="match status" value="1"/>
</dbReference>
<dbReference type="PIRSF" id="PIRSF000445">
    <property type="entry name" value="4pyrrol_synth_GluRdtase"/>
    <property type="match status" value="1"/>
</dbReference>
<dbReference type="SUPFAM" id="SSF69742">
    <property type="entry name" value="Glutamyl tRNA-reductase catalytic, N-terminal domain"/>
    <property type="match status" value="1"/>
</dbReference>
<dbReference type="SUPFAM" id="SSF69075">
    <property type="entry name" value="Glutamyl tRNA-reductase dimerization domain"/>
    <property type="match status" value="1"/>
</dbReference>
<dbReference type="SUPFAM" id="SSF51735">
    <property type="entry name" value="NAD(P)-binding Rossmann-fold domains"/>
    <property type="match status" value="1"/>
</dbReference>
<dbReference type="PROSITE" id="PS00747">
    <property type="entry name" value="GLUTR"/>
    <property type="match status" value="1"/>
</dbReference>